<comment type="function">
    <text evidence="1">Involved in the biosynthesis of the central metabolite phospho-alpha-D-ribosyl-1-pyrophosphate (PRPP) via the transfer of pyrophosphoryl group from ATP to 1-hydroxyl of ribose-5-phosphate (Rib-5-P).</text>
</comment>
<comment type="catalytic activity">
    <reaction evidence="1">
        <text>D-ribose 5-phosphate + ATP = 5-phospho-alpha-D-ribose 1-diphosphate + AMP + H(+)</text>
        <dbReference type="Rhea" id="RHEA:15609"/>
        <dbReference type="ChEBI" id="CHEBI:15378"/>
        <dbReference type="ChEBI" id="CHEBI:30616"/>
        <dbReference type="ChEBI" id="CHEBI:58017"/>
        <dbReference type="ChEBI" id="CHEBI:78346"/>
        <dbReference type="ChEBI" id="CHEBI:456215"/>
        <dbReference type="EC" id="2.7.6.1"/>
    </reaction>
</comment>
<comment type="cofactor">
    <cofactor evidence="1">
        <name>Mg(2+)</name>
        <dbReference type="ChEBI" id="CHEBI:18420"/>
    </cofactor>
    <text evidence="1">Binds 2 Mg(2+) ions per subunit.</text>
</comment>
<comment type="pathway">
    <text evidence="1">Metabolic intermediate biosynthesis; 5-phospho-alpha-D-ribose 1-diphosphate biosynthesis; 5-phospho-alpha-D-ribose 1-diphosphate from D-ribose 5-phosphate (route I): step 1/1.</text>
</comment>
<comment type="subunit">
    <text evidence="1">Homohexamer.</text>
</comment>
<comment type="subcellular location">
    <subcellularLocation>
        <location evidence="1">Cytoplasm</location>
    </subcellularLocation>
</comment>
<comment type="similarity">
    <text evidence="1">Belongs to the ribose-phosphate pyrophosphokinase family. Class I subfamily.</text>
</comment>
<protein>
    <recommendedName>
        <fullName evidence="1">Ribose-phosphate pyrophosphokinase</fullName>
        <shortName evidence="1">RPPK</shortName>
        <ecNumber evidence="1">2.7.6.1</ecNumber>
    </recommendedName>
    <alternativeName>
        <fullName evidence="1">5-phospho-D-ribosyl alpha-1-diphosphate synthase</fullName>
    </alternativeName>
    <alternativeName>
        <fullName evidence="1">Phosphoribosyl diphosphate synthase</fullName>
    </alternativeName>
    <alternativeName>
        <fullName evidence="1">Phosphoribosyl pyrophosphate synthase</fullName>
        <shortName evidence="1">P-Rib-PP synthase</shortName>
        <shortName evidence="1">PRPP synthase</shortName>
        <shortName evidence="1">PRPPase</shortName>
    </alternativeName>
</protein>
<keyword id="KW-0067">ATP-binding</keyword>
<keyword id="KW-0963">Cytoplasm</keyword>
<keyword id="KW-0418">Kinase</keyword>
<keyword id="KW-0460">Magnesium</keyword>
<keyword id="KW-0479">Metal-binding</keyword>
<keyword id="KW-0545">Nucleotide biosynthesis</keyword>
<keyword id="KW-0547">Nucleotide-binding</keyword>
<keyword id="KW-1185">Reference proteome</keyword>
<keyword id="KW-0808">Transferase</keyword>
<reference key="1">
    <citation type="journal article" date="2003" name="Nature">
        <title>Genome divergence in two Prochlorococcus ecotypes reflects oceanic niche differentiation.</title>
        <authorList>
            <person name="Rocap G."/>
            <person name="Larimer F.W."/>
            <person name="Lamerdin J.E."/>
            <person name="Malfatti S."/>
            <person name="Chain P."/>
            <person name="Ahlgren N.A."/>
            <person name="Arellano A."/>
            <person name="Coleman M."/>
            <person name="Hauser L."/>
            <person name="Hess W.R."/>
            <person name="Johnson Z.I."/>
            <person name="Land M.L."/>
            <person name="Lindell D."/>
            <person name="Post A.F."/>
            <person name="Regala W."/>
            <person name="Shah M."/>
            <person name="Shaw S.L."/>
            <person name="Steglich C."/>
            <person name="Sullivan M.B."/>
            <person name="Ting C.S."/>
            <person name="Tolonen A."/>
            <person name="Webb E.A."/>
            <person name="Zinser E.R."/>
            <person name="Chisholm S.W."/>
        </authorList>
    </citation>
    <scope>NUCLEOTIDE SEQUENCE [LARGE SCALE GENOMIC DNA]</scope>
    <source>
        <strain>MIT 9313</strain>
    </source>
</reference>
<sequence>MTSFLTAARTEQESISYDMQRLRLFSGTSNPALAREIAAYLGVPDGPRICKRFADGELYVQIQESIRGCDVFLIQPTCAPVNDNLMELLIMVDACQRASARQITAVVPYYGYARADRKTAGRESITAKLTANLLVKSGVNRVLAMDLHSAQIQGYFDIPCDHIYGSPVLVDYLAAQELNEVVVVSPDVGGVARARAFAKQMRDAPLAIIDKRRSGHNVAESLTVIGDVAGKTAILIDDMIDTGGTICSGARLLRQQGAKRVIACASHAVFSPPACERLSEEGLFEQVLVTNSIPIAAERHFPQLQVLSVANMLGEAIWRIHEESSVSSMFRG</sequence>
<organism>
    <name type="scientific">Prochlorococcus marinus (strain MIT 9313)</name>
    <dbReference type="NCBI Taxonomy" id="74547"/>
    <lineage>
        <taxon>Bacteria</taxon>
        <taxon>Bacillati</taxon>
        <taxon>Cyanobacteriota</taxon>
        <taxon>Cyanophyceae</taxon>
        <taxon>Synechococcales</taxon>
        <taxon>Prochlorococcaceae</taxon>
        <taxon>Prochlorococcus</taxon>
    </lineage>
</organism>
<gene>
    <name evidence="1" type="primary">prs</name>
    <name type="ordered locus">PMT_1074</name>
</gene>
<evidence type="ECO:0000255" key="1">
    <source>
        <dbReference type="HAMAP-Rule" id="MF_00583"/>
    </source>
</evidence>
<accession>Q7V6S2</accession>
<feature type="chain" id="PRO_0000141174" description="Ribose-phosphate pyrophosphokinase">
    <location>
        <begin position="1"/>
        <end position="332"/>
    </location>
</feature>
<feature type="active site" evidence="1">
    <location>
        <position position="211"/>
    </location>
</feature>
<feature type="binding site" evidence="1">
    <location>
        <begin position="55"/>
        <end position="57"/>
    </location>
    <ligand>
        <name>ATP</name>
        <dbReference type="ChEBI" id="CHEBI:30616"/>
    </ligand>
</feature>
<feature type="binding site" evidence="1">
    <location>
        <position position="148"/>
    </location>
    <ligand>
        <name>Mg(2+)</name>
        <dbReference type="ChEBI" id="CHEBI:18420"/>
        <label>1</label>
    </ligand>
</feature>
<feature type="binding site" evidence="1">
    <location>
        <position position="187"/>
    </location>
    <ligand>
        <name>Mg(2+)</name>
        <dbReference type="ChEBI" id="CHEBI:18420"/>
        <label>2</label>
    </ligand>
</feature>
<feature type="binding site" evidence="1">
    <location>
        <position position="213"/>
    </location>
    <ligand>
        <name>D-ribose 5-phosphate</name>
        <dbReference type="ChEBI" id="CHEBI:78346"/>
    </ligand>
</feature>
<feature type="binding site" evidence="1">
    <location>
        <position position="237"/>
    </location>
    <ligand>
        <name>D-ribose 5-phosphate</name>
        <dbReference type="ChEBI" id="CHEBI:78346"/>
    </ligand>
</feature>
<feature type="binding site" evidence="1">
    <location>
        <begin position="241"/>
        <end position="245"/>
    </location>
    <ligand>
        <name>D-ribose 5-phosphate</name>
        <dbReference type="ChEBI" id="CHEBI:78346"/>
    </ligand>
</feature>
<proteinExistence type="inferred from homology"/>
<dbReference type="EC" id="2.7.6.1" evidence="1"/>
<dbReference type="EMBL" id="BX548175">
    <property type="protein sequence ID" value="CAE21249.1"/>
    <property type="molecule type" value="Genomic_DNA"/>
</dbReference>
<dbReference type="RefSeq" id="WP_011130446.1">
    <property type="nucleotide sequence ID" value="NC_005071.1"/>
</dbReference>
<dbReference type="SMR" id="Q7V6S2"/>
<dbReference type="KEGG" id="pmt:PMT_1074"/>
<dbReference type="eggNOG" id="COG0462">
    <property type="taxonomic scope" value="Bacteria"/>
</dbReference>
<dbReference type="HOGENOM" id="CLU_033546_7_0_3"/>
<dbReference type="OrthoDB" id="9777067at2"/>
<dbReference type="UniPathway" id="UPA00087">
    <property type="reaction ID" value="UER00172"/>
</dbReference>
<dbReference type="Proteomes" id="UP000001423">
    <property type="component" value="Chromosome"/>
</dbReference>
<dbReference type="GO" id="GO:0005737">
    <property type="term" value="C:cytoplasm"/>
    <property type="evidence" value="ECO:0007669"/>
    <property type="project" value="UniProtKB-SubCell"/>
</dbReference>
<dbReference type="GO" id="GO:0002189">
    <property type="term" value="C:ribose phosphate diphosphokinase complex"/>
    <property type="evidence" value="ECO:0007669"/>
    <property type="project" value="TreeGrafter"/>
</dbReference>
<dbReference type="GO" id="GO:0005524">
    <property type="term" value="F:ATP binding"/>
    <property type="evidence" value="ECO:0007669"/>
    <property type="project" value="UniProtKB-KW"/>
</dbReference>
<dbReference type="GO" id="GO:0016301">
    <property type="term" value="F:kinase activity"/>
    <property type="evidence" value="ECO:0007669"/>
    <property type="project" value="UniProtKB-KW"/>
</dbReference>
<dbReference type="GO" id="GO:0000287">
    <property type="term" value="F:magnesium ion binding"/>
    <property type="evidence" value="ECO:0007669"/>
    <property type="project" value="UniProtKB-UniRule"/>
</dbReference>
<dbReference type="GO" id="GO:0004749">
    <property type="term" value="F:ribose phosphate diphosphokinase activity"/>
    <property type="evidence" value="ECO:0007669"/>
    <property type="project" value="UniProtKB-UniRule"/>
</dbReference>
<dbReference type="GO" id="GO:0006015">
    <property type="term" value="P:5-phosphoribose 1-diphosphate biosynthetic process"/>
    <property type="evidence" value="ECO:0007669"/>
    <property type="project" value="UniProtKB-UniRule"/>
</dbReference>
<dbReference type="GO" id="GO:0006164">
    <property type="term" value="P:purine nucleotide biosynthetic process"/>
    <property type="evidence" value="ECO:0007669"/>
    <property type="project" value="TreeGrafter"/>
</dbReference>
<dbReference type="GO" id="GO:0009156">
    <property type="term" value="P:ribonucleoside monophosphate biosynthetic process"/>
    <property type="evidence" value="ECO:0007669"/>
    <property type="project" value="InterPro"/>
</dbReference>
<dbReference type="CDD" id="cd06223">
    <property type="entry name" value="PRTases_typeI"/>
    <property type="match status" value="1"/>
</dbReference>
<dbReference type="FunFam" id="3.40.50.2020:FF:000002">
    <property type="entry name" value="Ribose-phosphate pyrophosphokinase"/>
    <property type="match status" value="1"/>
</dbReference>
<dbReference type="FunFam" id="3.40.50.2020:FF:000014">
    <property type="entry name" value="Ribose-phosphate pyrophosphokinase 1"/>
    <property type="match status" value="1"/>
</dbReference>
<dbReference type="Gene3D" id="3.40.50.2020">
    <property type="match status" value="2"/>
</dbReference>
<dbReference type="HAMAP" id="MF_00583_B">
    <property type="entry name" value="RibP_PPkinase_B"/>
    <property type="match status" value="1"/>
</dbReference>
<dbReference type="InterPro" id="IPR000842">
    <property type="entry name" value="PRib_PP_synth_CS"/>
</dbReference>
<dbReference type="InterPro" id="IPR029099">
    <property type="entry name" value="Pribosyltran_N"/>
</dbReference>
<dbReference type="InterPro" id="IPR000836">
    <property type="entry name" value="PRibTrfase_dom"/>
</dbReference>
<dbReference type="InterPro" id="IPR029057">
    <property type="entry name" value="PRTase-like"/>
</dbReference>
<dbReference type="InterPro" id="IPR005946">
    <property type="entry name" value="Rib-P_diPkinase"/>
</dbReference>
<dbReference type="InterPro" id="IPR037515">
    <property type="entry name" value="Rib-P_diPkinase_bac"/>
</dbReference>
<dbReference type="NCBIfam" id="NF002320">
    <property type="entry name" value="PRK01259.1"/>
    <property type="match status" value="1"/>
</dbReference>
<dbReference type="NCBIfam" id="NF002758">
    <property type="entry name" value="PRK02812.1"/>
    <property type="match status" value="1"/>
</dbReference>
<dbReference type="NCBIfam" id="TIGR01251">
    <property type="entry name" value="ribP_PPkin"/>
    <property type="match status" value="1"/>
</dbReference>
<dbReference type="PANTHER" id="PTHR10210">
    <property type="entry name" value="RIBOSE-PHOSPHATE DIPHOSPHOKINASE FAMILY MEMBER"/>
    <property type="match status" value="1"/>
</dbReference>
<dbReference type="PANTHER" id="PTHR10210:SF41">
    <property type="entry name" value="RIBOSE-PHOSPHATE PYROPHOSPHOKINASE 1, CHLOROPLASTIC"/>
    <property type="match status" value="1"/>
</dbReference>
<dbReference type="Pfam" id="PF14572">
    <property type="entry name" value="Pribosyl_synth"/>
    <property type="match status" value="1"/>
</dbReference>
<dbReference type="Pfam" id="PF13793">
    <property type="entry name" value="Pribosyltran_N"/>
    <property type="match status" value="1"/>
</dbReference>
<dbReference type="SMART" id="SM01400">
    <property type="entry name" value="Pribosyltran_N"/>
    <property type="match status" value="1"/>
</dbReference>
<dbReference type="SUPFAM" id="SSF53271">
    <property type="entry name" value="PRTase-like"/>
    <property type="match status" value="1"/>
</dbReference>
<dbReference type="PROSITE" id="PS00114">
    <property type="entry name" value="PRPP_SYNTHASE"/>
    <property type="match status" value="1"/>
</dbReference>
<name>KPRS_PROMM</name>